<dbReference type="EC" id="2.7.8.7" evidence="1"/>
<dbReference type="EMBL" id="AM040264">
    <property type="protein sequence ID" value="CAJ10635.1"/>
    <property type="molecule type" value="Genomic_DNA"/>
</dbReference>
<dbReference type="RefSeq" id="WP_002963803.1">
    <property type="nucleotide sequence ID" value="NZ_KN046823.1"/>
</dbReference>
<dbReference type="SMR" id="Q2YN04"/>
<dbReference type="STRING" id="359391.BAB1_0679"/>
<dbReference type="GeneID" id="97534013"/>
<dbReference type="KEGG" id="bmf:BAB1_0679"/>
<dbReference type="PATRIC" id="fig|359391.11.peg.2993"/>
<dbReference type="HOGENOM" id="CLU_089696_0_2_5"/>
<dbReference type="PhylomeDB" id="Q2YN04"/>
<dbReference type="Proteomes" id="UP000002719">
    <property type="component" value="Chromosome I"/>
</dbReference>
<dbReference type="GO" id="GO:0005737">
    <property type="term" value="C:cytoplasm"/>
    <property type="evidence" value="ECO:0007669"/>
    <property type="project" value="UniProtKB-SubCell"/>
</dbReference>
<dbReference type="GO" id="GO:0008897">
    <property type="term" value="F:holo-[acyl-carrier-protein] synthase activity"/>
    <property type="evidence" value="ECO:0007669"/>
    <property type="project" value="UniProtKB-UniRule"/>
</dbReference>
<dbReference type="GO" id="GO:0000287">
    <property type="term" value="F:magnesium ion binding"/>
    <property type="evidence" value="ECO:0007669"/>
    <property type="project" value="UniProtKB-UniRule"/>
</dbReference>
<dbReference type="GO" id="GO:0006633">
    <property type="term" value="P:fatty acid biosynthetic process"/>
    <property type="evidence" value="ECO:0007669"/>
    <property type="project" value="UniProtKB-UniRule"/>
</dbReference>
<dbReference type="Gene3D" id="3.90.470.20">
    <property type="entry name" value="4'-phosphopantetheinyl transferase domain"/>
    <property type="match status" value="1"/>
</dbReference>
<dbReference type="HAMAP" id="MF_00101">
    <property type="entry name" value="AcpS"/>
    <property type="match status" value="1"/>
</dbReference>
<dbReference type="InterPro" id="IPR008278">
    <property type="entry name" value="4-PPantetheinyl_Trfase_dom"/>
</dbReference>
<dbReference type="InterPro" id="IPR037143">
    <property type="entry name" value="4-PPantetheinyl_Trfase_dom_sf"/>
</dbReference>
<dbReference type="InterPro" id="IPR002582">
    <property type="entry name" value="ACPS"/>
</dbReference>
<dbReference type="InterPro" id="IPR004568">
    <property type="entry name" value="Ppantetheine-prot_Trfase_dom"/>
</dbReference>
<dbReference type="NCBIfam" id="TIGR00516">
    <property type="entry name" value="acpS"/>
    <property type="match status" value="1"/>
</dbReference>
<dbReference type="NCBIfam" id="TIGR00556">
    <property type="entry name" value="pantethn_trn"/>
    <property type="match status" value="1"/>
</dbReference>
<dbReference type="Pfam" id="PF01648">
    <property type="entry name" value="ACPS"/>
    <property type="match status" value="1"/>
</dbReference>
<dbReference type="SUPFAM" id="SSF56214">
    <property type="entry name" value="4'-phosphopantetheinyl transferase"/>
    <property type="match status" value="1"/>
</dbReference>
<accession>Q2YN04</accession>
<comment type="function">
    <text evidence="1">Transfers the 4'-phosphopantetheine moiety from coenzyme A to a Ser of acyl-carrier-protein.</text>
</comment>
<comment type="catalytic activity">
    <reaction evidence="1">
        <text>apo-[ACP] + CoA = holo-[ACP] + adenosine 3',5'-bisphosphate + H(+)</text>
        <dbReference type="Rhea" id="RHEA:12068"/>
        <dbReference type="Rhea" id="RHEA-COMP:9685"/>
        <dbReference type="Rhea" id="RHEA-COMP:9690"/>
        <dbReference type="ChEBI" id="CHEBI:15378"/>
        <dbReference type="ChEBI" id="CHEBI:29999"/>
        <dbReference type="ChEBI" id="CHEBI:57287"/>
        <dbReference type="ChEBI" id="CHEBI:58343"/>
        <dbReference type="ChEBI" id="CHEBI:64479"/>
        <dbReference type="EC" id="2.7.8.7"/>
    </reaction>
</comment>
<comment type="cofactor">
    <cofactor evidence="1">
        <name>Mg(2+)</name>
        <dbReference type="ChEBI" id="CHEBI:18420"/>
    </cofactor>
</comment>
<comment type="subcellular location">
    <subcellularLocation>
        <location evidence="1">Cytoplasm</location>
    </subcellularLocation>
</comment>
<comment type="similarity">
    <text evidence="1">Belongs to the P-Pant transferase superfamily. AcpS family.</text>
</comment>
<keyword id="KW-0963">Cytoplasm</keyword>
<keyword id="KW-0275">Fatty acid biosynthesis</keyword>
<keyword id="KW-0276">Fatty acid metabolism</keyword>
<keyword id="KW-0444">Lipid biosynthesis</keyword>
<keyword id="KW-0443">Lipid metabolism</keyword>
<keyword id="KW-0460">Magnesium</keyword>
<keyword id="KW-0479">Metal-binding</keyword>
<keyword id="KW-1185">Reference proteome</keyword>
<keyword id="KW-0808">Transferase</keyword>
<gene>
    <name evidence="1" type="primary">acpS</name>
    <name type="ordered locus">BAB1_0679</name>
</gene>
<sequence>MIVGIGSDLIDIRRVEKTLERHGSRFRDRVFTEIEQRKSEGRKQRAASYAKRFAAKEACAKALGTGIAEGVFWRDMGVVNTPSGKPTMHLTGGAAKQLQKLLPAGTNAAIHLTITDDFPLAQAFVIIEALPVLE</sequence>
<feature type="chain" id="PRO_0000228275" description="Holo-[acyl-carrier-protein] synthase">
    <location>
        <begin position="1"/>
        <end position="134"/>
    </location>
</feature>
<feature type="binding site" evidence="1">
    <location>
        <position position="8"/>
    </location>
    <ligand>
        <name>Mg(2+)</name>
        <dbReference type="ChEBI" id="CHEBI:18420"/>
    </ligand>
</feature>
<feature type="binding site" evidence="1">
    <location>
        <position position="57"/>
    </location>
    <ligand>
        <name>Mg(2+)</name>
        <dbReference type="ChEBI" id="CHEBI:18420"/>
    </ligand>
</feature>
<name>ACPS_BRUA2</name>
<proteinExistence type="inferred from homology"/>
<organism>
    <name type="scientific">Brucella abortus (strain 2308)</name>
    <dbReference type="NCBI Taxonomy" id="359391"/>
    <lineage>
        <taxon>Bacteria</taxon>
        <taxon>Pseudomonadati</taxon>
        <taxon>Pseudomonadota</taxon>
        <taxon>Alphaproteobacteria</taxon>
        <taxon>Hyphomicrobiales</taxon>
        <taxon>Brucellaceae</taxon>
        <taxon>Brucella/Ochrobactrum group</taxon>
        <taxon>Brucella</taxon>
    </lineage>
</organism>
<reference key="1">
    <citation type="journal article" date="2005" name="Infect. Immun.">
        <title>Whole-genome analyses of speciation events in pathogenic Brucellae.</title>
        <authorList>
            <person name="Chain P.S."/>
            <person name="Comerci D.J."/>
            <person name="Tolmasky M.E."/>
            <person name="Larimer F.W."/>
            <person name="Malfatti S.A."/>
            <person name="Vergez L.M."/>
            <person name="Aguero F."/>
            <person name="Land M.L."/>
            <person name="Ugalde R.A."/>
            <person name="Garcia E."/>
        </authorList>
    </citation>
    <scope>NUCLEOTIDE SEQUENCE [LARGE SCALE GENOMIC DNA]</scope>
    <source>
        <strain>2308</strain>
    </source>
</reference>
<evidence type="ECO:0000255" key="1">
    <source>
        <dbReference type="HAMAP-Rule" id="MF_00101"/>
    </source>
</evidence>
<protein>
    <recommendedName>
        <fullName evidence="1">Holo-[acyl-carrier-protein] synthase</fullName>
        <shortName evidence="1">Holo-ACP synthase</shortName>
        <ecNumber evidence="1">2.7.8.7</ecNumber>
    </recommendedName>
    <alternativeName>
        <fullName evidence="1">4'-phosphopantetheinyl transferase AcpS</fullName>
    </alternativeName>
</protein>